<evidence type="ECO:0000250" key="1">
    <source>
        <dbReference type="UniProtKB" id="Q3SYG4"/>
    </source>
</evidence>
<evidence type="ECO:0000256" key="2">
    <source>
        <dbReference type="SAM" id="MobiDB-lite"/>
    </source>
</evidence>
<evidence type="ECO:0000269" key="3">
    <source>
    </source>
</evidence>
<evidence type="ECO:0000269" key="4">
    <source>
    </source>
</evidence>
<evidence type="ECO:0000269" key="5">
    <source>
    </source>
</evidence>
<evidence type="ECO:0000305" key="6"/>
<evidence type="ECO:0000312" key="7">
    <source>
        <dbReference type="Proteomes" id="UP000001940"/>
    </source>
</evidence>
<evidence type="ECO:0000312" key="8">
    <source>
        <dbReference type="WormBase" id="C48B6.8"/>
    </source>
</evidence>
<protein>
    <recommendedName>
        <fullName evidence="6">Protein pthb1 homolog</fullName>
    </recommendedName>
    <alternativeName>
        <fullName evidence="8">Bardet-Biedl syndrome 9 protein homolog</fullName>
    </alternativeName>
</protein>
<name>PTHB1_CAEEL</name>
<proteinExistence type="evidence at protein level"/>
<keyword id="KW-0970">Cilium biogenesis/degradation</keyword>
<keyword id="KW-0653">Protein transport</keyword>
<keyword id="KW-1185">Reference proteome</keyword>
<keyword id="KW-0813">Transport</keyword>
<gene>
    <name evidence="8" type="primary">bbs-9</name>
    <name evidence="8" type="ORF">C48B6.8</name>
</gene>
<organism evidence="7">
    <name type="scientific">Caenorhabditis elegans</name>
    <dbReference type="NCBI Taxonomy" id="6239"/>
    <lineage>
        <taxon>Eukaryota</taxon>
        <taxon>Metazoa</taxon>
        <taxon>Ecdysozoa</taxon>
        <taxon>Nematoda</taxon>
        <taxon>Chromadorea</taxon>
        <taxon>Rhabditida</taxon>
        <taxon>Rhabditina</taxon>
        <taxon>Rhabditomorpha</taxon>
        <taxon>Rhabditoidea</taxon>
        <taxon>Rhabditidae</taxon>
        <taxon>Peloderinae</taxon>
        <taxon>Caenorhabditis</taxon>
    </lineage>
</organism>
<accession>O01514</accession>
<dbReference type="EMBL" id="BX284601">
    <property type="protein sequence ID" value="CCD67585.2"/>
    <property type="molecule type" value="Genomic_DNA"/>
</dbReference>
<dbReference type="RefSeq" id="NP_491973.4">
    <property type="nucleotide sequence ID" value="NM_059572.4"/>
</dbReference>
<dbReference type="SMR" id="O01514"/>
<dbReference type="ComplexPortal" id="CPX-428">
    <property type="entry name" value="BBSome complex"/>
</dbReference>
<dbReference type="DIP" id="DIP-61856N"/>
<dbReference type="FunCoup" id="O01514">
    <property type="interactions" value="872"/>
</dbReference>
<dbReference type="IntAct" id="O01514">
    <property type="interactions" value="2"/>
</dbReference>
<dbReference type="STRING" id="6239.C48B6.8.1"/>
<dbReference type="TCDB" id="3.A.33.1.2">
    <property type="family name" value="the bbsome complex (bbsome) family"/>
</dbReference>
<dbReference type="PaxDb" id="6239-C48B6.8"/>
<dbReference type="EnsemblMetazoa" id="C48B6.8.1">
    <property type="protein sequence ID" value="C48B6.8.1"/>
    <property type="gene ID" value="WBGene00016744"/>
</dbReference>
<dbReference type="GeneID" id="183572"/>
<dbReference type="KEGG" id="cel:CELE_C48B6.8"/>
<dbReference type="UCSC" id="C48B6.8">
    <property type="organism name" value="c. elegans"/>
</dbReference>
<dbReference type="AGR" id="WB:WBGene00016744"/>
<dbReference type="CTD" id="183572"/>
<dbReference type="WormBase" id="C48B6.8">
    <property type="protein sequence ID" value="CE46977"/>
    <property type="gene ID" value="WBGene00016744"/>
    <property type="gene designation" value="bbs-9"/>
</dbReference>
<dbReference type="eggNOG" id="KOG3679">
    <property type="taxonomic scope" value="Eukaryota"/>
</dbReference>
<dbReference type="GeneTree" id="ENSGT00390000000803"/>
<dbReference type="HOGENOM" id="CLU_019585_0_0_1"/>
<dbReference type="InParanoid" id="O01514"/>
<dbReference type="OMA" id="NMCVIPI"/>
<dbReference type="OrthoDB" id="10262646at2759"/>
<dbReference type="PhylomeDB" id="O01514"/>
<dbReference type="Reactome" id="R-CEL-5620922">
    <property type="pathway name" value="BBSome-mediated cargo-targeting to cilium"/>
</dbReference>
<dbReference type="PRO" id="PR:O01514"/>
<dbReference type="Proteomes" id="UP000001940">
    <property type="component" value="Chromosome I"/>
</dbReference>
<dbReference type="Bgee" id="WBGene00016744">
    <property type="expression patterns" value="Expressed in pharyngeal muscle cell (C elegans) and 3 other cell types or tissues"/>
</dbReference>
<dbReference type="GO" id="GO:0034464">
    <property type="term" value="C:BBSome"/>
    <property type="evidence" value="ECO:0000318"/>
    <property type="project" value="GO_Central"/>
</dbReference>
<dbReference type="GO" id="GO:0036064">
    <property type="term" value="C:ciliary basal body"/>
    <property type="evidence" value="ECO:0000314"/>
    <property type="project" value="MGI"/>
</dbReference>
<dbReference type="GO" id="GO:0005929">
    <property type="term" value="C:cilium"/>
    <property type="evidence" value="ECO:0000303"/>
    <property type="project" value="ComplexPortal"/>
</dbReference>
<dbReference type="GO" id="GO:0016020">
    <property type="term" value="C:membrane"/>
    <property type="evidence" value="ECO:0000318"/>
    <property type="project" value="GO_Central"/>
</dbReference>
<dbReference type="GO" id="GO:0060271">
    <property type="term" value="P:cilium assembly"/>
    <property type="evidence" value="ECO:0000318"/>
    <property type="project" value="GO_Central"/>
</dbReference>
<dbReference type="GO" id="GO:0015031">
    <property type="term" value="P:protein transport"/>
    <property type="evidence" value="ECO:0007669"/>
    <property type="project" value="UniProtKB-KW"/>
</dbReference>
<dbReference type="InterPro" id="IPR028073">
    <property type="entry name" value="PHTB1_N_dom"/>
</dbReference>
<dbReference type="InterPro" id="IPR026511">
    <property type="entry name" value="PTHB1"/>
</dbReference>
<dbReference type="InterPro" id="IPR055363">
    <property type="entry name" value="PTHB1_hp_dom"/>
</dbReference>
<dbReference type="InterPro" id="IPR055362">
    <property type="entry name" value="PTHB1_pf_dom"/>
</dbReference>
<dbReference type="InterPro" id="IPR036322">
    <property type="entry name" value="WD40_repeat_dom_sf"/>
</dbReference>
<dbReference type="PANTHER" id="PTHR20991">
    <property type="entry name" value="PARATHYROID HORMONE-RESPONSIVE B1 GENE"/>
    <property type="match status" value="1"/>
</dbReference>
<dbReference type="PANTHER" id="PTHR20991:SF0">
    <property type="entry name" value="PROTEIN PTHB1"/>
    <property type="match status" value="1"/>
</dbReference>
<dbReference type="Pfam" id="PF14727">
    <property type="entry name" value="PHTB1_N"/>
    <property type="match status" value="1"/>
</dbReference>
<dbReference type="Pfam" id="PF23338">
    <property type="entry name" value="PTHB1_hp"/>
    <property type="match status" value="1"/>
</dbReference>
<dbReference type="Pfam" id="PF23337">
    <property type="entry name" value="PTHB1_pf"/>
    <property type="match status" value="1"/>
</dbReference>
<dbReference type="SUPFAM" id="SSF50978">
    <property type="entry name" value="WD40 repeat-like"/>
    <property type="match status" value="1"/>
</dbReference>
<sequence>MSLFRLVEWVSQTIPNTSTILNASFFQDREQLVIGGENGQITISDPGFRDTNAHVLCTTETKYAILQMASDNFLPSMNNILAVLSPTKLTYYKVHFASPDETLASLDEIFSHSFSTSAWNMCVIPIEESTPQILVQSIDCKLSLFQGDQCVFSMVPLRALQPGPIGYCQTTQTLFVANNGFLAAIKFSLMSSGSQKKINYDWSFNLGDTAIQMKVTEGSKPTTIVLCRRHVSAFNATGSVVWQIRLEAVGMAMCLYRSLLINNTQFNRLIVSTSDDTLLIFQDNKLVWNCNAQMSPVALLVCSYNKSYENTITMMAPDGKVVVGYLGTEPNLYRLPEDKVIVNYAERMEEYKRMEQKIKESDAAGGAIKRKEGIQMKLSIGEIGKRTIEPNAASNAPYCNLIVEFSEVQNVSKLHINILSECASPSKQVILNVGTSKSTASIEIPFYVGSKKSPTSNKVTIAAHCAFTQLTVTKSIDLPFKVLFEESQIDRNAKYKVTIDTAGSVMPLNKLFSEFESENPQAIGFSLHGSDKTVSVFAANKSNRYRIQSEHISLLQITSRELVKRIAESAPGIEIGGVIPFEYMRETLDEIQELQTKKKEDSKKIDCRTKEVRAIEALSLNSCKTGNMGNLPSLDALFDKSYRELLDAMDSYNSLTAKIENQKASLNSLFQLAADLSKLSKVDTILNGSFWANTQQSLRDRLRWAVKTDRGNEMTMIEKLCEHSPKELPKIREEEEEEEQQVTA</sequence>
<comment type="function">
    <text evidence="1 3 4 5">Component of the BBSome complex (By similarity). The BBSome complex is thought to function as a coat complex required for sorting of specific membrane proteins to the primary cilia (By similarity). The BBSome complex is required for ciliogenesis but is dispensable for centriolar satellite function (By similarity). Required for proper BBSome complex assembly and its ciliary localization (PubMed:22922713). Required for cilia biogenesis and both the assembly and movement of intraflagellar transport proteins along the ciliary axoneme (PubMed:22022287, PubMed:22922713). In ciliated sensory neurons, required for the sensation of nitric oxide and avoidance of NO-producing organisms like P.aeruginosa (PubMed:30014846).</text>
</comment>
<comment type="subunit">
    <text evidence="1 4">Part of BBSome complex, that contains bbs-1, bbs-2, bbs-4, bbs-5, osm-12, bbs-8/ttc-8 and bbs-9 (By similarity). Interacts with bbs-1 (PubMed:22922713).</text>
</comment>
<comment type="disruption phenotype">
    <text evidence="3 4 5">Mutants have normal body morphology, but with reduced body length and width, delayed larval development and decreased roaming movements (PubMed:22022287). Defective cilia structure and function characterized by an increased accumulation and mislocalization of intraflagellar transport proteins and impaired movement of intraflagellar transport proteins along the ciliary axoneme (PubMed:22922713). Disrupted assembly of the BBSome complex at the base of the cilia (PubMed:22922713). Defective avoidance of nitric oxide and P.aeruginosa (PubMed:30014846).</text>
</comment>
<reference evidence="7" key="1">
    <citation type="journal article" date="1998" name="Science">
        <title>Genome sequence of the nematode C. elegans: a platform for investigating biology.</title>
        <authorList>
            <consortium name="The C. elegans sequencing consortium"/>
        </authorList>
    </citation>
    <scope>NUCLEOTIDE SEQUENCE [LARGE SCALE GENOMIC DNA]</scope>
    <source>
        <strain evidence="7">Bristol N2</strain>
    </source>
</reference>
<reference evidence="6" key="2">
    <citation type="journal article" date="2011" name="PLoS Genet.">
        <title>Mutations in a guanylate cyclase GCY-35/GCY-36 modify Bardet-Biedl syndrome-associated phenotypes in Caenorhabditis elegans.</title>
        <authorList>
            <person name="Mok C.A."/>
            <person name="Healey M.P."/>
            <person name="Shekhar T."/>
            <person name="Leroux M.R."/>
            <person name="Heon E."/>
            <person name="Zhen M."/>
        </authorList>
    </citation>
    <scope>FUNCTION</scope>
    <scope>DISRUPTION PHENOTYPE</scope>
</reference>
<reference evidence="6" key="3">
    <citation type="journal article" date="2012" name="Nat. Cell Biol.">
        <title>The BBSome controls IFT assembly and turnaround in cilia.</title>
        <authorList>
            <person name="Wei Q."/>
            <person name="Zhang Y."/>
            <person name="Li Y."/>
            <person name="Zhang Q."/>
            <person name="Ling K."/>
            <person name="Hu J."/>
        </authorList>
    </citation>
    <scope>FUNCTION</scope>
    <scope>INTERACTION WITH BBS-1</scope>
    <scope>DISRUPTION PHENOTYPE</scope>
</reference>
<reference key="4">
    <citation type="journal article" date="2018" name="Elife">
        <title>Thioredoxin shapes the C. elegans sensory response to Pseudomonas produced nitric oxide.</title>
        <authorList>
            <person name="Hao Y."/>
            <person name="Yang W."/>
            <person name="Ren J."/>
            <person name="Hall Q."/>
            <person name="Zhang Y."/>
            <person name="Kaplan J.M."/>
        </authorList>
    </citation>
    <scope>FUNCTION</scope>
    <scope>DISRUPTION PHENOTYPE</scope>
</reference>
<feature type="chain" id="PRO_0000435000" description="Protein pthb1 homolog" evidence="6">
    <location>
        <begin position="1"/>
        <end position="744"/>
    </location>
</feature>
<feature type="region of interest" description="Disordered" evidence="2">
    <location>
        <begin position="722"/>
        <end position="744"/>
    </location>
</feature>
<feature type="compositionally biased region" description="Basic and acidic residues" evidence="2">
    <location>
        <begin position="722"/>
        <end position="733"/>
    </location>
</feature>
<feature type="compositionally biased region" description="Acidic residues" evidence="2">
    <location>
        <begin position="734"/>
        <end position="744"/>
    </location>
</feature>